<protein>
    <recommendedName>
        <fullName evidence="1">Phosphoribosylformylglycinamidine synthase subunit PurQ</fullName>
        <shortName evidence="1">FGAM synthase</shortName>
        <ecNumber evidence="1">6.3.5.3</ecNumber>
    </recommendedName>
    <alternativeName>
        <fullName evidence="1">Formylglycinamide ribonucleotide amidotransferase subunit I</fullName>
        <shortName evidence="1">FGAR amidotransferase I</shortName>
        <shortName evidence="1">FGAR-AT I</shortName>
    </alternativeName>
    <alternativeName>
        <fullName evidence="1">Glutaminase PurQ</fullName>
        <ecNumber evidence="1">3.5.1.2</ecNumber>
    </alternativeName>
    <alternativeName>
        <fullName evidence="1">Phosphoribosylformylglycinamidine synthase subunit I</fullName>
    </alternativeName>
</protein>
<sequence length="223" mass="24934">MVKFAVIVFPGTNCDFETVEAIKRAGGEAERVWYKQSVKDYDGVVIPGGFSYADYLRAGAIAARQKVMEEIRELAEEGRPILGICNGFQILTEANLLPGALRPNKIPRFLCKWVHLKVVDVETPFTYLYEEGEVVRMPIAHAEGNYYIDNPSKVRIVFQYSDEKGSITEEANPNGSVLNIAGVTNKQGNVLGMMPHPERASDRFLGSEDGLKVFKSIVEWMKK</sequence>
<dbReference type="EC" id="6.3.5.3" evidence="1"/>
<dbReference type="EC" id="3.5.1.2" evidence="1"/>
<dbReference type="EMBL" id="BA000001">
    <property type="protein sequence ID" value="BAA31082.1"/>
    <property type="status" value="ALT_INIT"/>
    <property type="molecule type" value="Genomic_DNA"/>
</dbReference>
<dbReference type="PIR" id="C71211">
    <property type="entry name" value="C71211"/>
</dbReference>
<dbReference type="RefSeq" id="WP_048053523.1">
    <property type="nucleotide sequence ID" value="NC_000961.1"/>
</dbReference>
<dbReference type="SMR" id="O59619"/>
<dbReference type="STRING" id="70601.gene:9378968"/>
<dbReference type="EnsemblBacteria" id="BAA31082">
    <property type="protein sequence ID" value="BAA31082"/>
    <property type="gene ID" value="BAA31082"/>
</dbReference>
<dbReference type="GeneID" id="1442802"/>
<dbReference type="KEGG" id="pho:PH1955"/>
<dbReference type="eggNOG" id="arCOG00102">
    <property type="taxonomic scope" value="Archaea"/>
</dbReference>
<dbReference type="OrthoDB" id="6486at2157"/>
<dbReference type="UniPathway" id="UPA00074">
    <property type="reaction ID" value="UER00128"/>
</dbReference>
<dbReference type="Proteomes" id="UP000000752">
    <property type="component" value="Chromosome"/>
</dbReference>
<dbReference type="GO" id="GO:0005737">
    <property type="term" value="C:cytoplasm"/>
    <property type="evidence" value="ECO:0007669"/>
    <property type="project" value="UniProtKB-SubCell"/>
</dbReference>
<dbReference type="GO" id="GO:0005524">
    <property type="term" value="F:ATP binding"/>
    <property type="evidence" value="ECO:0007669"/>
    <property type="project" value="UniProtKB-KW"/>
</dbReference>
<dbReference type="GO" id="GO:0004359">
    <property type="term" value="F:glutaminase activity"/>
    <property type="evidence" value="ECO:0007669"/>
    <property type="project" value="UniProtKB-EC"/>
</dbReference>
<dbReference type="GO" id="GO:0004642">
    <property type="term" value="F:phosphoribosylformylglycinamidine synthase activity"/>
    <property type="evidence" value="ECO:0007669"/>
    <property type="project" value="UniProtKB-UniRule"/>
</dbReference>
<dbReference type="GO" id="GO:0006189">
    <property type="term" value="P:'de novo' IMP biosynthetic process"/>
    <property type="evidence" value="ECO:0007669"/>
    <property type="project" value="UniProtKB-UniRule"/>
</dbReference>
<dbReference type="CDD" id="cd01740">
    <property type="entry name" value="GATase1_FGAR_AT"/>
    <property type="match status" value="1"/>
</dbReference>
<dbReference type="Gene3D" id="3.40.50.880">
    <property type="match status" value="1"/>
</dbReference>
<dbReference type="HAMAP" id="MF_00421">
    <property type="entry name" value="PurQ"/>
    <property type="match status" value="1"/>
</dbReference>
<dbReference type="InterPro" id="IPR029062">
    <property type="entry name" value="Class_I_gatase-like"/>
</dbReference>
<dbReference type="InterPro" id="IPR010075">
    <property type="entry name" value="PRibForGlyAmidine_synth_PurQ"/>
</dbReference>
<dbReference type="NCBIfam" id="TIGR01737">
    <property type="entry name" value="FGAM_synth_I"/>
    <property type="match status" value="1"/>
</dbReference>
<dbReference type="NCBIfam" id="NF002957">
    <property type="entry name" value="PRK03619.1"/>
    <property type="match status" value="1"/>
</dbReference>
<dbReference type="PANTHER" id="PTHR47552">
    <property type="entry name" value="PHOSPHORIBOSYLFORMYLGLYCINAMIDINE SYNTHASE SUBUNIT PURQ"/>
    <property type="match status" value="1"/>
</dbReference>
<dbReference type="PANTHER" id="PTHR47552:SF1">
    <property type="entry name" value="PHOSPHORIBOSYLFORMYLGLYCINAMIDINE SYNTHASE SUBUNIT PURQ"/>
    <property type="match status" value="1"/>
</dbReference>
<dbReference type="Pfam" id="PF13507">
    <property type="entry name" value="GATase_5"/>
    <property type="match status" value="1"/>
</dbReference>
<dbReference type="PIRSF" id="PIRSF001586">
    <property type="entry name" value="FGAM_synth_I"/>
    <property type="match status" value="1"/>
</dbReference>
<dbReference type="SMART" id="SM01211">
    <property type="entry name" value="GATase_5"/>
    <property type="match status" value="1"/>
</dbReference>
<dbReference type="SUPFAM" id="SSF52317">
    <property type="entry name" value="Class I glutamine amidotransferase-like"/>
    <property type="match status" value="1"/>
</dbReference>
<dbReference type="PROSITE" id="PS51273">
    <property type="entry name" value="GATASE_TYPE_1"/>
    <property type="match status" value="1"/>
</dbReference>
<feature type="chain" id="PRO_0000100617" description="Phosphoribosylformylglycinamidine synthase subunit PurQ">
    <location>
        <begin position="1"/>
        <end position="223"/>
    </location>
</feature>
<feature type="domain" description="Glutamine amidotransferase type-1" evidence="1">
    <location>
        <begin position="4"/>
        <end position="223"/>
    </location>
</feature>
<feature type="active site" description="Nucleophile" evidence="1">
    <location>
        <position position="85"/>
    </location>
</feature>
<feature type="active site" evidence="1">
    <location>
        <position position="196"/>
    </location>
</feature>
<feature type="active site" evidence="1">
    <location>
        <position position="198"/>
    </location>
</feature>
<organism>
    <name type="scientific">Pyrococcus horikoshii (strain ATCC 700860 / DSM 12428 / JCM 9974 / NBRC 100139 / OT-3)</name>
    <dbReference type="NCBI Taxonomy" id="70601"/>
    <lineage>
        <taxon>Archaea</taxon>
        <taxon>Methanobacteriati</taxon>
        <taxon>Methanobacteriota</taxon>
        <taxon>Thermococci</taxon>
        <taxon>Thermococcales</taxon>
        <taxon>Thermococcaceae</taxon>
        <taxon>Pyrococcus</taxon>
    </lineage>
</organism>
<accession>O59619</accession>
<gene>
    <name evidence="1" type="primary">purQ</name>
    <name type="ordered locus">PH1955</name>
</gene>
<comment type="function">
    <text evidence="1">Part of the phosphoribosylformylglycinamidine synthase complex involved in the purines biosynthetic pathway. Catalyzes the ATP-dependent conversion of formylglycinamide ribonucleotide (FGAR) and glutamine to yield formylglycinamidine ribonucleotide (FGAM) and glutamate. The FGAM synthase complex is composed of three subunits. PurQ produces an ammonia molecule by converting glutamine to glutamate. PurL transfers the ammonia molecule to FGAR to form FGAM in an ATP-dependent manner. PurS interacts with PurQ and PurL and is thought to assist in the transfer of the ammonia molecule from PurQ to PurL.</text>
</comment>
<comment type="catalytic activity">
    <reaction evidence="1">
        <text>N(2)-formyl-N(1)-(5-phospho-beta-D-ribosyl)glycinamide + L-glutamine + ATP + H2O = 2-formamido-N(1)-(5-O-phospho-beta-D-ribosyl)acetamidine + L-glutamate + ADP + phosphate + H(+)</text>
        <dbReference type="Rhea" id="RHEA:17129"/>
        <dbReference type="ChEBI" id="CHEBI:15377"/>
        <dbReference type="ChEBI" id="CHEBI:15378"/>
        <dbReference type="ChEBI" id="CHEBI:29985"/>
        <dbReference type="ChEBI" id="CHEBI:30616"/>
        <dbReference type="ChEBI" id="CHEBI:43474"/>
        <dbReference type="ChEBI" id="CHEBI:58359"/>
        <dbReference type="ChEBI" id="CHEBI:147286"/>
        <dbReference type="ChEBI" id="CHEBI:147287"/>
        <dbReference type="ChEBI" id="CHEBI:456216"/>
        <dbReference type="EC" id="6.3.5.3"/>
    </reaction>
</comment>
<comment type="catalytic activity">
    <reaction evidence="1">
        <text>L-glutamine + H2O = L-glutamate + NH4(+)</text>
        <dbReference type="Rhea" id="RHEA:15889"/>
        <dbReference type="ChEBI" id="CHEBI:15377"/>
        <dbReference type="ChEBI" id="CHEBI:28938"/>
        <dbReference type="ChEBI" id="CHEBI:29985"/>
        <dbReference type="ChEBI" id="CHEBI:58359"/>
        <dbReference type="EC" id="3.5.1.2"/>
    </reaction>
</comment>
<comment type="pathway">
    <text evidence="1">Purine metabolism; IMP biosynthesis via de novo pathway; 5-amino-1-(5-phospho-D-ribosyl)imidazole from N(2)-formyl-N(1)-(5-phospho-D-ribosyl)glycinamide: step 1/2.</text>
</comment>
<comment type="subunit">
    <text evidence="1">Part of the FGAM synthase complex composed of 1 PurL, 1 PurQ and 2 PurS subunits.</text>
</comment>
<comment type="subcellular location">
    <subcellularLocation>
        <location evidence="1">Cytoplasm</location>
    </subcellularLocation>
</comment>
<comment type="sequence caution" evidence="2">
    <conflict type="erroneous initiation">
        <sequence resource="EMBL-CDS" id="BAA31082"/>
    </conflict>
    <text>Extended N-terminus.</text>
</comment>
<proteinExistence type="inferred from homology"/>
<reference key="1">
    <citation type="journal article" date="1998" name="DNA Res.">
        <title>Complete sequence and gene organization of the genome of a hyper-thermophilic archaebacterium, Pyrococcus horikoshii OT3.</title>
        <authorList>
            <person name="Kawarabayasi Y."/>
            <person name="Sawada M."/>
            <person name="Horikawa H."/>
            <person name="Haikawa Y."/>
            <person name="Hino Y."/>
            <person name="Yamamoto S."/>
            <person name="Sekine M."/>
            <person name="Baba S."/>
            <person name="Kosugi H."/>
            <person name="Hosoyama A."/>
            <person name="Nagai Y."/>
            <person name="Sakai M."/>
            <person name="Ogura K."/>
            <person name="Otsuka R."/>
            <person name="Nakazawa H."/>
            <person name="Takamiya M."/>
            <person name="Ohfuku Y."/>
            <person name="Funahashi T."/>
            <person name="Tanaka T."/>
            <person name="Kudoh Y."/>
            <person name="Yamazaki J."/>
            <person name="Kushida N."/>
            <person name="Oguchi A."/>
            <person name="Aoki K."/>
            <person name="Yoshizawa T."/>
            <person name="Nakamura Y."/>
            <person name="Robb F.T."/>
            <person name="Horikoshi K."/>
            <person name="Masuchi Y."/>
            <person name="Shizuya H."/>
            <person name="Kikuchi H."/>
        </authorList>
    </citation>
    <scope>NUCLEOTIDE SEQUENCE [LARGE SCALE GENOMIC DNA]</scope>
    <source>
        <strain>ATCC 700860 / DSM 12428 / JCM 9974 / NBRC 100139 / OT-3</strain>
    </source>
</reference>
<keyword id="KW-0067">ATP-binding</keyword>
<keyword id="KW-0963">Cytoplasm</keyword>
<keyword id="KW-0315">Glutamine amidotransferase</keyword>
<keyword id="KW-0378">Hydrolase</keyword>
<keyword id="KW-0436">Ligase</keyword>
<keyword id="KW-0547">Nucleotide-binding</keyword>
<keyword id="KW-0658">Purine biosynthesis</keyword>
<evidence type="ECO:0000255" key="1">
    <source>
        <dbReference type="HAMAP-Rule" id="MF_00421"/>
    </source>
</evidence>
<evidence type="ECO:0000305" key="2"/>
<name>PURQ_PYRHO</name>